<name>SYH_PSEU2</name>
<feature type="chain" id="PRO_0000136229" description="Histidine--tRNA ligase">
    <location>
        <begin position="1"/>
        <end position="429"/>
    </location>
</feature>
<dbReference type="EC" id="6.1.1.21" evidence="1"/>
<dbReference type="EMBL" id="CP000075">
    <property type="protein sequence ID" value="AAY36300.1"/>
    <property type="molecule type" value="Genomic_DNA"/>
</dbReference>
<dbReference type="RefSeq" id="WP_011266910.1">
    <property type="nucleotide sequence ID" value="NC_007005.1"/>
</dbReference>
<dbReference type="RefSeq" id="YP_234338.1">
    <property type="nucleotide sequence ID" value="NC_007005.1"/>
</dbReference>
<dbReference type="SMR" id="Q4ZX22"/>
<dbReference type="STRING" id="205918.Psyr_1249"/>
<dbReference type="KEGG" id="psb:Psyr_1249"/>
<dbReference type="PATRIC" id="fig|205918.7.peg.1281"/>
<dbReference type="eggNOG" id="COG0124">
    <property type="taxonomic scope" value="Bacteria"/>
</dbReference>
<dbReference type="HOGENOM" id="CLU_025113_1_1_6"/>
<dbReference type="OrthoDB" id="9800814at2"/>
<dbReference type="Proteomes" id="UP000000426">
    <property type="component" value="Chromosome"/>
</dbReference>
<dbReference type="GO" id="GO:0005737">
    <property type="term" value="C:cytoplasm"/>
    <property type="evidence" value="ECO:0007669"/>
    <property type="project" value="UniProtKB-SubCell"/>
</dbReference>
<dbReference type="GO" id="GO:0005524">
    <property type="term" value="F:ATP binding"/>
    <property type="evidence" value="ECO:0007669"/>
    <property type="project" value="UniProtKB-UniRule"/>
</dbReference>
<dbReference type="GO" id="GO:0004821">
    <property type="term" value="F:histidine-tRNA ligase activity"/>
    <property type="evidence" value="ECO:0007669"/>
    <property type="project" value="UniProtKB-UniRule"/>
</dbReference>
<dbReference type="GO" id="GO:0006427">
    <property type="term" value="P:histidyl-tRNA aminoacylation"/>
    <property type="evidence" value="ECO:0007669"/>
    <property type="project" value="UniProtKB-UniRule"/>
</dbReference>
<dbReference type="CDD" id="cd00773">
    <property type="entry name" value="HisRS-like_core"/>
    <property type="match status" value="1"/>
</dbReference>
<dbReference type="FunFam" id="3.30.930.10:FF:000005">
    <property type="entry name" value="Histidine--tRNA ligase"/>
    <property type="match status" value="1"/>
</dbReference>
<dbReference type="Gene3D" id="3.40.50.800">
    <property type="entry name" value="Anticodon-binding domain"/>
    <property type="match status" value="1"/>
</dbReference>
<dbReference type="Gene3D" id="3.30.930.10">
    <property type="entry name" value="Bira Bifunctional Protein, Domain 2"/>
    <property type="match status" value="1"/>
</dbReference>
<dbReference type="HAMAP" id="MF_00127">
    <property type="entry name" value="His_tRNA_synth"/>
    <property type="match status" value="1"/>
</dbReference>
<dbReference type="InterPro" id="IPR006195">
    <property type="entry name" value="aa-tRNA-synth_II"/>
</dbReference>
<dbReference type="InterPro" id="IPR045864">
    <property type="entry name" value="aa-tRNA-synth_II/BPL/LPL"/>
</dbReference>
<dbReference type="InterPro" id="IPR004154">
    <property type="entry name" value="Anticodon-bd"/>
</dbReference>
<dbReference type="InterPro" id="IPR036621">
    <property type="entry name" value="Anticodon-bd_dom_sf"/>
</dbReference>
<dbReference type="InterPro" id="IPR015807">
    <property type="entry name" value="His-tRNA-ligase"/>
</dbReference>
<dbReference type="InterPro" id="IPR041715">
    <property type="entry name" value="HisRS-like_core"/>
</dbReference>
<dbReference type="InterPro" id="IPR004516">
    <property type="entry name" value="HisRS/HisZ"/>
</dbReference>
<dbReference type="NCBIfam" id="TIGR00442">
    <property type="entry name" value="hisS"/>
    <property type="match status" value="1"/>
</dbReference>
<dbReference type="PANTHER" id="PTHR43707:SF1">
    <property type="entry name" value="HISTIDINE--TRNA LIGASE, MITOCHONDRIAL-RELATED"/>
    <property type="match status" value="1"/>
</dbReference>
<dbReference type="PANTHER" id="PTHR43707">
    <property type="entry name" value="HISTIDYL-TRNA SYNTHETASE"/>
    <property type="match status" value="1"/>
</dbReference>
<dbReference type="Pfam" id="PF03129">
    <property type="entry name" value="HGTP_anticodon"/>
    <property type="match status" value="1"/>
</dbReference>
<dbReference type="Pfam" id="PF13393">
    <property type="entry name" value="tRNA-synt_His"/>
    <property type="match status" value="1"/>
</dbReference>
<dbReference type="PIRSF" id="PIRSF001549">
    <property type="entry name" value="His-tRNA_synth"/>
    <property type="match status" value="1"/>
</dbReference>
<dbReference type="SUPFAM" id="SSF52954">
    <property type="entry name" value="Class II aaRS ABD-related"/>
    <property type="match status" value="1"/>
</dbReference>
<dbReference type="SUPFAM" id="SSF55681">
    <property type="entry name" value="Class II aaRS and biotin synthetases"/>
    <property type="match status" value="1"/>
</dbReference>
<dbReference type="PROSITE" id="PS50862">
    <property type="entry name" value="AA_TRNA_LIGASE_II"/>
    <property type="match status" value="1"/>
</dbReference>
<keyword id="KW-0030">Aminoacyl-tRNA synthetase</keyword>
<keyword id="KW-0067">ATP-binding</keyword>
<keyword id="KW-0963">Cytoplasm</keyword>
<keyword id="KW-0436">Ligase</keyword>
<keyword id="KW-0547">Nucleotide-binding</keyword>
<keyword id="KW-0648">Protein biosynthesis</keyword>
<accession>Q4ZX22</accession>
<sequence length="429" mass="47829">MSKSLQAIRGMNDILPEQTPLWRHFEGTVARLLDNYGYRQIRMPIVEFTELFKRSIGEVTDIVEKEMYTFADRNGDSLTLRPEGTAACVRAVLEHGITGGGQVQKLWYIGPMFRHERPQKGRYRQFHQIGVEVFNLDGPDIDAELIVMTWRLWGLLGIRDAVKLELNSLGTSEARARYREALVEYLSARLDQLDEDSQRRLKTNPLRVLDTKHPETQAVLVDAPKLADYLDDESRVHFEGLKARLDAAGIPYVINPKLVRGLDYYSKTVFEWVTDQLGAQGTVCAGGRYDGLVEQMGGKPTAGVGFAMGIERLVLLLETLEQVPEEIARQVDVYLCAFGEAAELAALALTEKVRDQLPTLRLQVNAGAGSFKSQFKKADKSGALYALILGEEELAAKVIGVKPLRGQGEQQNIAWDALSEHLASCVVQG</sequence>
<organism>
    <name type="scientific">Pseudomonas syringae pv. syringae (strain B728a)</name>
    <dbReference type="NCBI Taxonomy" id="205918"/>
    <lineage>
        <taxon>Bacteria</taxon>
        <taxon>Pseudomonadati</taxon>
        <taxon>Pseudomonadota</taxon>
        <taxon>Gammaproteobacteria</taxon>
        <taxon>Pseudomonadales</taxon>
        <taxon>Pseudomonadaceae</taxon>
        <taxon>Pseudomonas</taxon>
        <taxon>Pseudomonas syringae</taxon>
    </lineage>
</organism>
<protein>
    <recommendedName>
        <fullName evidence="1">Histidine--tRNA ligase</fullName>
        <ecNumber evidence="1">6.1.1.21</ecNumber>
    </recommendedName>
    <alternativeName>
        <fullName evidence="1">Histidyl-tRNA synthetase</fullName>
        <shortName evidence="1">HisRS</shortName>
    </alternativeName>
</protein>
<evidence type="ECO:0000255" key="1">
    <source>
        <dbReference type="HAMAP-Rule" id="MF_00127"/>
    </source>
</evidence>
<reference key="1">
    <citation type="journal article" date="2005" name="Proc. Natl. Acad. Sci. U.S.A.">
        <title>Comparison of the complete genome sequences of Pseudomonas syringae pv. syringae B728a and pv. tomato DC3000.</title>
        <authorList>
            <person name="Feil H."/>
            <person name="Feil W.S."/>
            <person name="Chain P."/>
            <person name="Larimer F."/>
            <person name="Dibartolo G."/>
            <person name="Copeland A."/>
            <person name="Lykidis A."/>
            <person name="Trong S."/>
            <person name="Nolan M."/>
            <person name="Goltsman E."/>
            <person name="Thiel J."/>
            <person name="Malfatti S."/>
            <person name="Loper J.E."/>
            <person name="Lapidus A."/>
            <person name="Detter J.C."/>
            <person name="Land M."/>
            <person name="Richardson P.M."/>
            <person name="Kyrpides N.C."/>
            <person name="Ivanova N."/>
            <person name="Lindow S.E."/>
        </authorList>
    </citation>
    <scope>NUCLEOTIDE SEQUENCE [LARGE SCALE GENOMIC DNA]</scope>
    <source>
        <strain>B728a</strain>
    </source>
</reference>
<proteinExistence type="inferred from homology"/>
<comment type="catalytic activity">
    <reaction evidence="1">
        <text>tRNA(His) + L-histidine + ATP = L-histidyl-tRNA(His) + AMP + diphosphate + H(+)</text>
        <dbReference type="Rhea" id="RHEA:17313"/>
        <dbReference type="Rhea" id="RHEA-COMP:9665"/>
        <dbReference type="Rhea" id="RHEA-COMP:9689"/>
        <dbReference type="ChEBI" id="CHEBI:15378"/>
        <dbReference type="ChEBI" id="CHEBI:30616"/>
        <dbReference type="ChEBI" id="CHEBI:33019"/>
        <dbReference type="ChEBI" id="CHEBI:57595"/>
        <dbReference type="ChEBI" id="CHEBI:78442"/>
        <dbReference type="ChEBI" id="CHEBI:78527"/>
        <dbReference type="ChEBI" id="CHEBI:456215"/>
        <dbReference type="EC" id="6.1.1.21"/>
    </reaction>
</comment>
<comment type="subunit">
    <text evidence="1">Homodimer.</text>
</comment>
<comment type="subcellular location">
    <subcellularLocation>
        <location evidence="1">Cytoplasm</location>
    </subcellularLocation>
</comment>
<comment type="similarity">
    <text evidence="1">Belongs to the class-II aminoacyl-tRNA synthetase family.</text>
</comment>
<gene>
    <name evidence="1" type="primary">hisS</name>
    <name type="ordered locus">Psyr_1249</name>
</gene>